<feature type="chain" id="PRO_1000206554" description="Large ribosomal subunit protein bL9">
    <location>
        <begin position="1"/>
        <end position="151"/>
    </location>
</feature>
<protein>
    <recommendedName>
        <fullName evidence="1">Large ribosomal subunit protein bL9</fullName>
    </recommendedName>
    <alternativeName>
        <fullName evidence="2">50S ribosomal protein L9</fullName>
    </alternativeName>
</protein>
<accession>C5CD93</accession>
<keyword id="KW-1185">Reference proteome</keyword>
<keyword id="KW-0687">Ribonucleoprotein</keyword>
<keyword id="KW-0689">Ribosomal protein</keyword>
<keyword id="KW-0694">RNA-binding</keyword>
<keyword id="KW-0699">rRNA-binding</keyword>
<sequence length="151" mass="16904">MKVILLKDVAKLGKKGEIKEVSDGYGRNYLIPRGLAVEATKSELSKLKNIEDQKKKKEERTKANSEELLRKIKQRHFRMKVKAGASGKLFGAVTSADIAELIAKELGTEFSKRYVDLKENIKNTGEYKVNLKLPGNVKGSIIIAIEKSEED</sequence>
<evidence type="ECO:0000255" key="1">
    <source>
        <dbReference type="HAMAP-Rule" id="MF_00503"/>
    </source>
</evidence>
<evidence type="ECO:0000305" key="2"/>
<reference key="1">
    <citation type="submission" date="2009-06" db="EMBL/GenBank/DDBJ databases">
        <title>Complete sequence of Thermotogales bacterium TBF 19.5.1.</title>
        <authorList>
            <consortium name="US DOE Joint Genome Institute"/>
            <person name="Lucas S."/>
            <person name="Copeland A."/>
            <person name="Lapidus A."/>
            <person name="Glavina del Rio T."/>
            <person name="Tice H."/>
            <person name="Bruce D."/>
            <person name="Goodwin L."/>
            <person name="Pitluck S."/>
            <person name="Chertkov O."/>
            <person name="Brettin T."/>
            <person name="Detter J.C."/>
            <person name="Han C."/>
            <person name="Schmutz J."/>
            <person name="Larimer F."/>
            <person name="Land M."/>
            <person name="Hauser L."/>
            <person name="Kyrpides N."/>
            <person name="Ovchinnikova G."/>
            <person name="Noll K."/>
        </authorList>
    </citation>
    <scope>NUCLEOTIDE SEQUENCE [LARGE SCALE GENOMIC DNA]</scope>
    <source>
        <strain>ATCC BAA-1733 / DSM 21960 / TBF 19.5.1</strain>
    </source>
</reference>
<proteinExistence type="inferred from homology"/>
<organism>
    <name type="scientific">Kosmotoga olearia (strain ATCC BAA-1733 / DSM 21960 / TBF 19.5.1)</name>
    <dbReference type="NCBI Taxonomy" id="521045"/>
    <lineage>
        <taxon>Bacteria</taxon>
        <taxon>Thermotogati</taxon>
        <taxon>Thermotogota</taxon>
        <taxon>Thermotogae</taxon>
        <taxon>Kosmotogales</taxon>
        <taxon>Kosmotogaceae</taxon>
        <taxon>Kosmotoga</taxon>
    </lineage>
</organism>
<gene>
    <name evidence="1" type="primary">rplI</name>
    <name type="ordered locus">Kole_0312</name>
</gene>
<name>RL9_KOSOT</name>
<dbReference type="EMBL" id="CP001634">
    <property type="protein sequence ID" value="ACR79037.1"/>
    <property type="molecule type" value="Genomic_DNA"/>
</dbReference>
<dbReference type="RefSeq" id="WP_012744824.1">
    <property type="nucleotide sequence ID" value="NC_012785.1"/>
</dbReference>
<dbReference type="SMR" id="C5CD93"/>
<dbReference type="STRING" id="521045.Kole_0312"/>
<dbReference type="KEGG" id="kol:Kole_0312"/>
<dbReference type="eggNOG" id="COG0359">
    <property type="taxonomic scope" value="Bacteria"/>
</dbReference>
<dbReference type="HOGENOM" id="CLU_078938_3_0_0"/>
<dbReference type="OrthoDB" id="9788336at2"/>
<dbReference type="Proteomes" id="UP000002382">
    <property type="component" value="Chromosome"/>
</dbReference>
<dbReference type="GO" id="GO:1990904">
    <property type="term" value="C:ribonucleoprotein complex"/>
    <property type="evidence" value="ECO:0007669"/>
    <property type="project" value="UniProtKB-KW"/>
</dbReference>
<dbReference type="GO" id="GO:0005840">
    <property type="term" value="C:ribosome"/>
    <property type="evidence" value="ECO:0007669"/>
    <property type="project" value="UniProtKB-KW"/>
</dbReference>
<dbReference type="GO" id="GO:0019843">
    <property type="term" value="F:rRNA binding"/>
    <property type="evidence" value="ECO:0007669"/>
    <property type="project" value="UniProtKB-UniRule"/>
</dbReference>
<dbReference type="GO" id="GO:0003735">
    <property type="term" value="F:structural constituent of ribosome"/>
    <property type="evidence" value="ECO:0007669"/>
    <property type="project" value="InterPro"/>
</dbReference>
<dbReference type="GO" id="GO:0006412">
    <property type="term" value="P:translation"/>
    <property type="evidence" value="ECO:0007669"/>
    <property type="project" value="UniProtKB-UniRule"/>
</dbReference>
<dbReference type="FunFam" id="3.40.5.10:FF:000002">
    <property type="entry name" value="50S ribosomal protein L9"/>
    <property type="match status" value="1"/>
</dbReference>
<dbReference type="Gene3D" id="3.10.430.100">
    <property type="entry name" value="Ribosomal protein L9, C-terminal domain"/>
    <property type="match status" value="1"/>
</dbReference>
<dbReference type="Gene3D" id="3.40.5.10">
    <property type="entry name" value="Ribosomal protein L9, N-terminal domain"/>
    <property type="match status" value="1"/>
</dbReference>
<dbReference type="HAMAP" id="MF_00503">
    <property type="entry name" value="Ribosomal_bL9"/>
    <property type="match status" value="1"/>
</dbReference>
<dbReference type="InterPro" id="IPR000244">
    <property type="entry name" value="Ribosomal_bL9"/>
</dbReference>
<dbReference type="InterPro" id="IPR009027">
    <property type="entry name" value="Ribosomal_bL9/RNase_H1_N"/>
</dbReference>
<dbReference type="InterPro" id="IPR020594">
    <property type="entry name" value="Ribosomal_bL9_bac/chp"/>
</dbReference>
<dbReference type="InterPro" id="IPR020069">
    <property type="entry name" value="Ribosomal_bL9_C"/>
</dbReference>
<dbReference type="InterPro" id="IPR036791">
    <property type="entry name" value="Ribosomal_bL9_C_sf"/>
</dbReference>
<dbReference type="InterPro" id="IPR020070">
    <property type="entry name" value="Ribosomal_bL9_N"/>
</dbReference>
<dbReference type="InterPro" id="IPR036935">
    <property type="entry name" value="Ribosomal_bL9_N_sf"/>
</dbReference>
<dbReference type="NCBIfam" id="TIGR00158">
    <property type="entry name" value="L9"/>
    <property type="match status" value="1"/>
</dbReference>
<dbReference type="PANTHER" id="PTHR21368">
    <property type="entry name" value="50S RIBOSOMAL PROTEIN L9"/>
    <property type="match status" value="1"/>
</dbReference>
<dbReference type="Pfam" id="PF03948">
    <property type="entry name" value="Ribosomal_L9_C"/>
    <property type="match status" value="1"/>
</dbReference>
<dbReference type="Pfam" id="PF01281">
    <property type="entry name" value="Ribosomal_L9_N"/>
    <property type="match status" value="1"/>
</dbReference>
<dbReference type="SUPFAM" id="SSF55658">
    <property type="entry name" value="L9 N-domain-like"/>
    <property type="match status" value="1"/>
</dbReference>
<dbReference type="SUPFAM" id="SSF55653">
    <property type="entry name" value="Ribosomal protein L9 C-domain"/>
    <property type="match status" value="1"/>
</dbReference>
<dbReference type="PROSITE" id="PS00651">
    <property type="entry name" value="RIBOSOMAL_L9"/>
    <property type="match status" value="1"/>
</dbReference>
<comment type="function">
    <text evidence="1">Binds to the 23S rRNA.</text>
</comment>
<comment type="similarity">
    <text evidence="1">Belongs to the bacterial ribosomal protein bL9 family.</text>
</comment>